<sequence length="82" mass="8755">MSGQLEVSAPSRSILNDKWDVVLSNLVVKTGLGFGAGVFASVLFFKRRAFPVWLGVGFGLGRGYAEGDAIFRSHAGLRAVRA</sequence>
<organism>
    <name type="scientific">Eremothecium gossypii (strain ATCC 10895 / CBS 109.51 / FGSC 9923 / NRRL Y-1056)</name>
    <name type="common">Yeast</name>
    <name type="synonym">Ashbya gossypii</name>
    <dbReference type="NCBI Taxonomy" id="284811"/>
    <lineage>
        <taxon>Eukaryota</taxon>
        <taxon>Fungi</taxon>
        <taxon>Dikarya</taxon>
        <taxon>Ascomycota</taxon>
        <taxon>Saccharomycotina</taxon>
        <taxon>Saccharomycetes</taxon>
        <taxon>Saccharomycetales</taxon>
        <taxon>Saccharomycetaceae</taxon>
        <taxon>Eremothecium</taxon>
    </lineage>
</organism>
<dbReference type="EMBL" id="AE016819">
    <property type="protein sequence ID" value="AAS54115.1"/>
    <property type="molecule type" value="Genomic_DNA"/>
</dbReference>
<dbReference type="RefSeq" id="NP_986291.1">
    <property type="nucleotide sequence ID" value="NM_212427.1"/>
</dbReference>
<dbReference type="FunCoup" id="Q751T2">
    <property type="interactions" value="91"/>
</dbReference>
<dbReference type="STRING" id="284811.Q751T2"/>
<dbReference type="EnsemblFungi" id="AAS54115">
    <property type="protein sequence ID" value="AAS54115"/>
    <property type="gene ID" value="AGOS_AFR743W"/>
</dbReference>
<dbReference type="GeneID" id="4622582"/>
<dbReference type="KEGG" id="ago:AGOS_AFR743W"/>
<dbReference type="eggNOG" id="KOG4604">
    <property type="taxonomic scope" value="Eukaryota"/>
</dbReference>
<dbReference type="HOGENOM" id="CLU_068905_3_0_1"/>
<dbReference type="InParanoid" id="Q751T2"/>
<dbReference type="OMA" id="SNCRHDL"/>
<dbReference type="OrthoDB" id="1916310at2759"/>
<dbReference type="Proteomes" id="UP000000591">
    <property type="component" value="Chromosome VI"/>
</dbReference>
<dbReference type="GO" id="GO:0061617">
    <property type="term" value="C:MICOS complex"/>
    <property type="evidence" value="ECO:0007669"/>
    <property type="project" value="InterPro"/>
</dbReference>
<dbReference type="GO" id="GO:0005739">
    <property type="term" value="C:mitochondrion"/>
    <property type="evidence" value="ECO:0000318"/>
    <property type="project" value="GO_Central"/>
</dbReference>
<dbReference type="GO" id="GO:0042407">
    <property type="term" value="P:cristae formation"/>
    <property type="evidence" value="ECO:0007669"/>
    <property type="project" value="EnsemblFungi"/>
</dbReference>
<dbReference type="InterPro" id="IPR007512">
    <property type="entry name" value="Mic10"/>
</dbReference>
<dbReference type="PANTHER" id="PTHR21304">
    <property type="entry name" value="MICOS COMPLEX SUBUNIT MIC10"/>
    <property type="match status" value="1"/>
</dbReference>
<dbReference type="PANTHER" id="PTHR21304:SF0">
    <property type="entry name" value="MICOS COMPLEX SUBUNIT MIC10"/>
    <property type="match status" value="1"/>
</dbReference>
<dbReference type="Pfam" id="PF04418">
    <property type="entry name" value="DUF543"/>
    <property type="match status" value="1"/>
</dbReference>
<gene>
    <name type="primary">MIC10</name>
    <name type="ordered locus">AFR743W</name>
</gene>
<reference key="1">
    <citation type="journal article" date="2004" name="Science">
        <title>The Ashbya gossypii genome as a tool for mapping the ancient Saccharomyces cerevisiae genome.</title>
        <authorList>
            <person name="Dietrich F.S."/>
            <person name="Voegeli S."/>
            <person name="Brachat S."/>
            <person name="Lerch A."/>
            <person name="Gates K."/>
            <person name="Steiner S."/>
            <person name="Mohr C."/>
            <person name="Poehlmann R."/>
            <person name="Luedi P."/>
            <person name="Choi S."/>
            <person name="Wing R.A."/>
            <person name="Flavier A."/>
            <person name="Gaffney T.D."/>
            <person name="Philippsen P."/>
        </authorList>
    </citation>
    <scope>NUCLEOTIDE SEQUENCE [LARGE SCALE GENOMIC DNA]</scope>
    <source>
        <strain>ATCC 10895 / CBS 109.51 / FGSC 9923 / NRRL Y-1056</strain>
    </source>
</reference>
<reference key="2">
    <citation type="journal article" date="2013" name="G3 (Bethesda)">
        <title>Genomes of Ashbya fungi isolated from insects reveal four mating-type loci, numerous translocations, lack of transposons, and distinct gene duplications.</title>
        <authorList>
            <person name="Dietrich F.S."/>
            <person name="Voegeli S."/>
            <person name="Kuo S."/>
            <person name="Philippsen P."/>
        </authorList>
    </citation>
    <scope>GENOME REANNOTATION</scope>
    <source>
        <strain>ATCC 10895 / CBS 109.51 / FGSC 9923 / NRRL Y-1056</strain>
    </source>
</reference>
<keyword id="KW-0472">Membrane</keyword>
<keyword id="KW-0496">Mitochondrion</keyword>
<keyword id="KW-0999">Mitochondrion inner membrane</keyword>
<keyword id="KW-1185">Reference proteome</keyword>
<keyword id="KW-0812">Transmembrane</keyword>
<keyword id="KW-1133">Transmembrane helix</keyword>
<proteinExistence type="inferred from homology"/>
<comment type="function">
    <text evidence="1">Component of the MICOS complex, a large protein complex of the mitochondrial inner membrane that plays crucial roles in the maintenance of crista junctions, inner membrane architecture, and formation of contact sites to the outer membrane.</text>
</comment>
<comment type="subunit">
    <text evidence="1">Component of the mitochondrial contact site and cristae organizing system (MICOS) complex.</text>
</comment>
<comment type="subcellular location">
    <subcellularLocation>
        <location evidence="1">Mitochondrion inner membrane</location>
        <topology evidence="1">Single-pass membrane protein</topology>
    </subcellularLocation>
    <text evidence="1">The C-terminus is located in the intermembrane space, while the location of the N-terminus has not been determined yet.</text>
</comment>
<comment type="similarity">
    <text evidence="3">Belongs to the MICOS complex subunit Mic10 family.</text>
</comment>
<evidence type="ECO:0000250" key="1"/>
<evidence type="ECO:0000255" key="2"/>
<evidence type="ECO:0000305" key="3"/>
<feature type="chain" id="PRO_0000221637" description="MICOS complex subunit MIC10">
    <location>
        <begin position="1"/>
        <end position="82"/>
    </location>
</feature>
<feature type="transmembrane region" description="Helical" evidence="2">
    <location>
        <begin position="21"/>
        <end position="43"/>
    </location>
</feature>
<feature type="topological domain" description="Mitochondrial intermembrane" evidence="2">
    <location>
        <begin position="44"/>
        <end position="82"/>
    </location>
</feature>
<accession>Q751T2</accession>
<name>MIC10_EREGS</name>
<protein>
    <recommendedName>
        <fullName>MICOS complex subunit MIC10</fullName>
    </recommendedName>
    <alternativeName>
        <fullName>Mitochondrial inner membrane organizing system protein 1</fullName>
    </alternativeName>
</protein>